<accession>Q6D245</accession>
<proteinExistence type="inferred from homology"/>
<reference key="1">
    <citation type="journal article" date="2004" name="Proc. Natl. Acad. Sci. U.S.A.">
        <title>Genome sequence of the enterobacterial phytopathogen Erwinia carotovora subsp. atroseptica and characterization of virulence factors.</title>
        <authorList>
            <person name="Bell K.S."/>
            <person name="Sebaihia M."/>
            <person name="Pritchard L."/>
            <person name="Holden M.T.G."/>
            <person name="Hyman L.J."/>
            <person name="Holeva M.C."/>
            <person name="Thomson N.R."/>
            <person name="Bentley S.D."/>
            <person name="Churcher L.J.C."/>
            <person name="Mungall K."/>
            <person name="Atkin R."/>
            <person name="Bason N."/>
            <person name="Brooks K."/>
            <person name="Chillingworth T."/>
            <person name="Clark K."/>
            <person name="Doggett J."/>
            <person name="Fraser A."/>
            <person name="Hance Z."/>
            <person name="Hauser H."/>
            <person name="Jagels K."/>
            <person name="Moule S."/>
            <person name="Norbertczak H."/>
            <person name="Ormond D."/>
            <person name="Price C."/>
            <person name="Quail M.A."/>
            <person name="Sanders M."/>
            <person name="Walker D."/>
            <person name="Whitehead S."/>
            <person name="Salmond G.P.C."/>
            <person name="Birch P.R.J."/>
            <person name="Parkhill J."/>
            <person name="Toth I.K."/>
        </authorList>
    </citation>
    <scope>NUCLEOTIDE SEQUENCE [LARGE SCALE GENOMIC DNA]</scope>
    <source>
        <strain>SCRI 1043 / ATCC BAA-672</strain>
    </source>
</reference>
<evidence type="ECO:0000255" key="1">
    <source>
        <dbReference type="HAMAP-Rule" id="MF_01252"/>
    </source>
</evidence>
<evidence type="ECO:0000255" key="2">
    <source>
        <dbReference type="PROSITE-ProRule" id="PRU00238"/>
    </source>
</evidence>
<feature type="chain" id="PRO_0000052435" description="Flavohemoprotein">
    <location>
        <begin position="1"/>
        <end position="396"/>
    </location>
</feature>
<feature type="domain" description="Globin" evidence="2">
    <location>
        <begin position="1"/>
        <end position="136"/>
    </location>
</feature>
<feature type="domain" description="FAD-binding FR-type" evidence="1">
    <location>
        <begin position="150"/>
        <end position="255"/>
    </location>
</feature>
<feature type="region of interest" description="Reductase">
    <location>
        <begin position="147"/>
        <end position="396"/>
    </location>
</feature>
<feature type="active site" description="Charge relay system" evidence="1">
    <location>
        <position position="95"/>
    </location>
</feature>
<feature type="active site" description="Charge relay system" evidence="1">
    <location>
        <position position="135"/>
    </location>
</feature>
<feature type="binding site" description="proximal binding residue" evidence="1">
    <location>
        <position position="85"/>
    </location>
    <ligand>
        <name>heme b</name>
        <dbReference type="ChEBI" id="CHEBI:60344"/>
    </ligand>
    <ligandPart>
        <name>Fe</name>
        <dbReference type="ChEBI" id="CHEBI:18248"/>
    </ligandPart>
</feature>
<feature type="binding site" evidence="1">
    <location>
        <position position="188"/>
    </location>
    <ligand>
        <name>FAD</name>
        <dbReference type="ChEBI" id="CHEBI:57692"/>
    </ligand>
</feature>
<feature type="binding site" evidence="1">
    <location>
        <begin position="204"/>
        <end position="207"/>
    </location>
    <ligand>
        <name>FAD</name>
        <dbReference type="ChEBI" id="CHEBI:57692"/>
    </ligand>
</feature>
<feature type="binding site" evidence="1">
    <location>
        <begin position="268"/>
        <end position="273"/>
    </location>
    <ligand>
        <name>NADP(+)</name>
        <dbReference type="ChEBI" id="CHEBI:58349"/>
    </ligand>
</feature>
<feature type="binding site" evidence="1">
    <location>
        <begin position="389"/>
        <end position="392"/>
    </location>
    <ligand>
        <name>FAD</name>
        <dbReference type="ChEBI" id="CHEBI:57692"/>
    </ligand>
</feature>
<feature type="site" description="Involved in heme-bound ligand stabilization and O-O bond activation" evidence="1">
    <location>
        <position position="29"/>
    </location>
</feature>
<feature type="site" description="Influences the redox potential of the prosthetic heme and FAD groups" evidence="1">
    <location>
        <position position="84"/>
    </location>
</feature>
<feature type="site" description="Influences the redox potential of the prosthetic heme and FAD groups" evidence="1">
    <location>
        <position position="388"/>
    </location>
</feature>
<organism>
    <name type="scientific">Pectobacterium atrosepticum (strain SCRI 1043 / ATCC BAA-672)</name>
    <name type="common">Erwinia carotovora subsp. atroseptica</name>
    <dbReference type="NCBI Taxonomy" id="218491"/>
    <lineage>
        <taxon>Bacteria</taxon>
        <taxon>Pseudomonadati</taxon>
        <taxon>Pseudomonadota</taxon>
        <taxon>Gammaproteobacteria</taxon>
        <taxon>Enterobacterales</taxon>
        <taxon>Pectobacteriaceae</taxon>
        <taxon>Pectobacterium</taxon>
    </lineage>
</organism>
<gene>
    <name evidence="1" type="primary">hmp</name>
    <name type="ordered locus">ECA3251</name>
</gene>
<keyword id="KW-0216">Detoxification</keyword>
<keyword id="KW-0274">FAD</keyword>
<keyword id="KW-0285">Flavoprotein</keyword>
<keyword id="KW-0349">Heme</keyword>
<keyword id="KW-0408">Iron</keyword>
<keyword id="KW-0479">Metal-binding</keyword>
<keyword id="KW-0520">NAD</keyword>
<keyword id="KW-0521">NADP</keyword>
<keyword id="KW-0560">Oxidoreductase</keyword>
<keyword id="KW-0561">Oxygen transport</keyword>
<keyword id="KW-1185">Reference proteome</keyword>
<keyword id="KW-0813">Transport</keyword>
<protein>
    <recommendedName>
        <fullName evidence="1">Flavohemoprotein</fullName>
    </recommendedName>
    <alternativeName>
        <fullName evidence="1">Flavohemoglobin</fullName>
    </alternativeName>
    <alternativeName>
        <fullName evidence="1">Hemoglobin-like protein</fullName>
    </alternativeName>
    <alternativeName>
        <fullName evidence="1">Nitric oxide dioxygenase</fullName>
        <shortName evidence="1">NO oxygenase</shortName>
        <shortName evidence="1">NOD</shortName>
        <ecNumber evidence="1">1.14.12.17</ecNumber>
    </alternativeName>
</protein>
<comment type="function">
    <text evidence="1">Is involved in NO detoxification in an aerobic process, termed nitric oxide dioxygenase (NOD) reaction that utilizes O(2) and NAD(P)H to convert NO to nitrate, which protects the bacterium from various noxious nitrogen compounds. Therefore, plays a central role in the inducible response to nitrosative stress.</text>
</comment>
<comment type="catalytic activity">
    <reaction evidence="1">
        <text>2 nitric oxide + NADPH + 2 O2 = 2 nitrate + NADP(+) + H(+)</text>
        <dbReference type="Rhea" id="RHEA:19465"/>
        <dbReference type="ChEBI" id="CHEBI:15378"/>
        <dbReference type="ChEBI" id="CHEBI:15379"/>
        <dbReference type="ChEBI" id="CHEBI:16480"/>
        <dbReference type="ChEBI" id="CHEBI:17632"/>
        <dbReference type="ChEBI" id="CHEBI:57783"/>
        <dbReference type="ChEBI" id="CHEBI:58349"/>
        <dbReference type="EC" id="1.14.12.17"/>
    </reaction>
</comment>
<comment type="catalytic activity">
    <reaction evidence="1">
        <text>2 nitric oxide + NADH + 2 O2 = 2 nitrate + NAD(+) + H(+)</text>
        <dbReference type="Rhea" id="RHEA:19469"/>
        <dbReference type="ChEBI" id="CHEBI:15378"/>
        <dbReference type="ChEBI" id="CHEBI:15379"/>
        <dbReference type="ChEBI" id="CHEBI:16480"/>
        <dbReference type="ChEBI" id="CHEBI:17632"/>
        <dbReference type="ChEBI" id="CHEBI:57540"/>
        <dbReference type="ChEBI" id="CHEBI:57945"/>
        <dbReference type="EC" id="1.14.12.17"/>
    </reaction>
</comment>
<comment type="cofactor">
    <cofactor evidence="1">
        <name>heme b</name>
        <dbReference type="ChEBI" id="CHEBI:60344"/>
    </cofactor>
    <text evidence="1">Binds 1 heme b (iron(II)-protoporphyrin IX) group per subunit.</text>
</comment>
<comment type="cofactor">
    <cofactor evidence="1">
        <name>FAD</name>
        <dbReference type="ChEBI" id="CHEBI:57692"/>
    </cofactor>
    <text evidence="1">Binds 1 FAD per subunit.</text>
</comment>
<comment type="domain">
    <text>Consists of two distinct domains; an N-terminal heme-containing oxygen-binding domain and a C-terminal reductase domain with binding sites for FAD and NAD(P)H.</text>
</comment>
<comment type="similarity">
    <text evidence="1">Belongs to the globin family. Two-domain flavohemoproteins subfamily.</text>
</comment>
<comment type="similarity">
    <text evidence="1">In the C-terminal section; belongs to the flavoprotein pyridine nucleotide cytochrome reductase family.</text>
</comment>
<sequence length="396" mass="44356">MLDNHTIAIVKSTIPLLAETGPKLTAHFYDRMFTHNPELKDIFNMSNQRNGDQREALFNAICAYATNIENLAALLPAVERIAQKHTSFNIQADQYQIVGNHLLATLDEMFSPGQEVLDAWGKAYGVLANVFIQREDDIYRSTETKTGGWSGVRPFRIVNKQLQSSVITSFTLEPTDGQPIADFQPGQYLAIYIKHDSFANQEIRQYSLTHAPNGKSYRIAVKREAQGTVSGYLHDTAREGDIVHLAAPHGDFFLDIPTDTPVALISGGVGQTPMLGMLHTLKQQDHQAKVLWLHAAENGTAHAFTDEIEQTGQALPHFDHHIWYREPQQTDRPGEDYHHSGLMQLASLKGELTTPDMHYYLCGPVVFMQFVAQQLLAMGIPAEQLHYECFGPHKVV</sequence>
<dbReference type="EC" id="1.14.12.17" evidence="1"/>
<dbReference type="EMBL" id="BX950851">
    <property type="protein sequence ID" value="CAG76149.1"/>
    <property type="molecule type" value="Genomic_DNA"/>
</dbReference>
<dbReference type="RefSeq" id="WP_011094770.1">
    <property type="nucleotide sequence ID" value="NC_004547.2"/>
</dbReference>
<dbReference type="SMR" id="Q6D245"/>
<dbReference type="STRING" id="218491.ECA3251"/>
<dbReference type="KEGG" id="eca:ECA3251"/>
<dbReference type="PATRIC" id="fig|218491.5.peg.3294"/>
<dbReference type="eggNOG" id="COG1017">
    <property type="taxonomic scope" value="Bacteria"/>
</dbReference>
<dbReference type="eggNOG" id="COG1018">
    <property type="taxonomic scope" value="Bacteria"/>
</dbReference>
<dbReference type="HOGENOM" id="CLU_003827_12_0_6"/>
<dbReference type="OrthoDB" id="9801223at2"/>
<dbReference type="Proteomes" id="UP000007966">
    <property type="component" value="Chromosome"/>
</dbReference>
<dbReference type="GO" id="GO:0071949">
    <property type="term" value="F:FAD binding"/>
    <property type="evidence" value="ECO:0007669"/>
    <property type="project" value="InterPro"/>
</dbReference>
<dbReference type="GO" id="GO:0020037">
    <property type="term" value="F:heme binding"/>
    <property type="evidence" value="ECO:0007669"/>
    <property type="project" value="InterPro"/>
</dbReference>
<dbReference type="GO" id="GO:0046872">
    <property type="term" value="F:metal ion binding"/>
    <property type="evidence" value="ECO:0007669"/>
    <property type="project" value="UniProtKB-KW"/>
</dbReference>
<dbReference type="GO" id="GO:0008941">
    <property type="term" value="F:nitric oxide dioxygenase NAD(P)H activity"/>
    <property type="evidence" value="ECO:0007669"/>
    <property type="project" value="UniProtKB-UniRule"/>
</dbReference>
<dbReference type="GO" id="GO:0019825">
    <property type="term" value="F:oxygen binding"/>
    <property type="evidence" value="ECO:0007669"/>
    <property type="project" value="InterPro"/>
</dbReference>
<dbReference type="GO" id="GO:0005344">
    <property type="term" value="F:oxygen carrier activity"/>
    <property type="evidence" value="ECO:0007669"/>
    <property type="project" value="UniProtKB-UniRule"/>
</dbReference>
<dbReference type="GO" id="GO:0071500">
    <property type="term" value="P:cellular response to nitrosative stress"/>
    <property type="evidence" value="ECO:0007669"/>
    <property type="project" value="TreeGrafter"/>
</dbReference>
<dbReference type="GO" id="GO:0046210">
    <property type="term" value="P:nitric oxide catabolic process"/>
    <property type="evidence" value="ECO:0007669"/>
    <property type="project" value="TreeGrafter"/>
</dbReference>
<dbReference type="GO" id="GO:0009636">
    <property type="term" value="P:response to toxic substance"/>
    <property type="evidence" value="ECO:0007669"/>
    <property type="project" value="UniProtKB-KW"/>
</dbReference>
<dbReference type="CDD" id="cd06184">
    <property type="entry name" value="flavohem_like_fad_nad_binding"/>
    <property type="match status" value="1"/>
</dbReference>
<dbReference type="CDD" id="cd14776">
    <property type="entry name" value="HmpEc-globin-like"/>
    <property type="match status" value="1"/>
</dbReference>
<dbReference type="FunFam" id="1.10.490.10:FF:000003">
    <property type="entry name" value="Flavohemoprotein"/>
    <property type="match status" value="1"/>
</dbReference>
<dbReference type="FunFam" id="2.40.30.10:FF:000034">
    <property type="entry name" value="Flavohemoprotein"/>
    <property type="match status" value="1"/>
</dbReference>
<dbReference type="FunFam" id="3.40.50.80:FF:000010">
    <property type="entry name" value="Flavohemoprotein"/>
    <property type="match status" value="1"/>
</dbReference>
<dbReference type="Gene3D" id="1.10.490.10">
    <property type="entry name" value="Globins"/>
    <property type="match status" value="1"/>
</dbReference>
<dbReference type="Gene3D" id="3.40.50.80">
    <property type="entry name" value="Nucleotide-binding domain of ferredoxin-NADP reductase (FNR) module"/>
    <property type="match status" value="1"/>
</dbReference>
<dbReference type="Gene3D" id="2.40.30.10">
    <property type="entry name" value="Translation factors"/>
    <property type="match status" value="1"/>
</dbReference>
<dbReference type="HAMAP" id="MF_01252">
    <property type="entry name" value="Hmp"/>
    <property type="match status" value="1"/>
</dbReference>
<dbReference type="InterPro" id="IPR008333">
    <property type="entry name" value="Cbr1-like_FAD-bd_dom"/>
</dbReference>
<dbReference type="InterPro" id="IPR017927">
    <property type="entry name" value="FAD-bd_FR_type"/>
</dbReference>
<dbReference type="InterPro" id="IPR039261">
    <property type="entry name" value="FNR_nucleotide-bd"/>
</dbReference>
<dbReference type="InterPro" id="IPR000971">
    <property type="entry name" value="Globin"/>
</dbReference>
<dbReference type="InterPro" id="IPR009050">
    <property type="entry name" value="Globin-like_sf"/>
</dbReference>
<dbReference type="InterPro" id="IPR012292">
    <property type="entry name" value="Globin/Proto"/>
</dbReference>
<dbReference type="InterPro" id="IPR023950">
    <property type="entry name" value="Hmp"/>
</dbReference>
<dbReference type="InterPro" id="IPR001433">
    <property type="entry name" value="OxRdtase_FAD/NAD-bd"/>
</dbReference>
<dbReference type="InterPro" id="IPR017938">
    <property type="entry name" value="Riboflavin_synthase-like_b-brl"/>
</dbReference>
<dbReference type="NCBIfam" id="NF009805">
    <property type="entry name" value="PRK13289.1"/>
    <property type="match status" value="1"/>
</dbReference>
<dbReference type="PANTHER" id="PTHR43396">
    <property type="entry name" value="FLAVOHEMOPROTEIN"/>
    <property type="match status" value="1"/>
</dbReference>
<dbReference type="PANTHER" id="PTHR43396:SF3">
    <property type="entry name" value="FLAVOHEMOPROTEIN"/>
    <property type="match status" value="1"/>
</dbReference>
<dbReference type="Pfam" id="PF00970">
    <property type="entry name" value="FAD_binding_6"/>
    <property type="match status" value="1"/>
</dbReference>
<dbReference type="Pfam" id="PF00042">
    <property type="entry name" value="Globin"/>
    <property type="match status" value="1"/>
</dbReference>
<dbReference type="Pfam" id="PF00175">
    <property type="entry name" value="NAD_binding_1"/>
    <property type="match status" value="1"/>
</dbReference>
<dbReference type="PRINTS" id="PR00410">
    <property type="entry name" value="PHEHYDRXLASE"/>
</dbReference>
<dbReference type="SUPFAM" id="SSF52343">
    <property type="entry name" value="Ferredoxin reductase-like, C-terminal NADP-linked domain"/>
    <property type="match status" value="1"/>
</dbReference>
<dbReference type="SUPFAM" id="SSF46458">
    <property type="entry name" value="Globin-like"/>
    <property type="match status" value="1"/>
</dbReference>
<dbReference type="SUPFAM" id="SSF63380">
    <property type="entry name" value="Riboflavin synthase domain-like"/>
    <property type="match status" value="1"/>
</dbReference>
<dbReference type="PROSITE" id="PS51384">
    <property type="entry name" value="FAD_FR"/>
    <property type="match status" value="1"/>
</dbReference>
<dbReference type="PROSITE" id="PS01033">
    <property type="entry name" value="GLOBIN"/>
    <property type="match status" value="1"/>
</dbReference>
<name>HMP_PECAS</name>